<sequence>MAAVVKSVALAGRPTTPDRVHEVLGRSMLVDGLDIVLDLTRSGGSYLVDAITGRRYLDMFTFVASSALGMNPPALVDDREFHAELMQAALNKPSNSDVYSVAMARFVETFARVLGDPALPHLFFVEGGALAVENALKAAFDWKSRHNQAHGIDPALGTQVLHLRGAFHGRSGYTLSLTNTKPTITARFPKFDWPRIDAPYMRPGLDEPAMAALEAEALRQARAAFETRPHDIACFVAEPIQGEGGDRHFRPEFFAAMRELCDEFDALLIFDEVQTGCGLTGTAWAYQQLDVAPDIVAFGKKTQVCGVMAGRRVDEVADNVFAVPSRLNSTWGGNLTDMVRARRILEVIEAEGLFERAVQHGKYLRARLDELAADFPAVVLDPRGRGLMCAFSLPTTADRDELIRQLWQRAVIVLPAGADTVRFRPPLTVSTAEIDAAIAAVRSALPVVT</sequence>
<evidence type="ECO:0000269" key="1">
    <source>
    </source>
</evidence>
<evidence type="ECO:0000269" key="2">
    <source>
    </source>
</evidence>
<evidence type="ECO:0000269" key="3">
    <source>
    </source>
</evidence>
<evidence type="ECO:0000269" key="4">
    <source>
    </source>
</evidence>
<evidence type="ECO:0000269" key="5">
    <source>
    </source>
</evidence>
<evidence type="ECO:0000269" key="6">
    <source>
    </source>
</evidence>
<evidence type="ECO:0000269" key="7">
    <source>
    </source>
</evidence>
<evidence type="ECO:0000269" key="8">
    <source>
    </source>
</evidence>
<evidence type="ECO:0000303" key="9">
    <source>
    </source>
</evidence>
<evidence type="ECO:0000303" key="10">
    <source>
    </source>
</evidence>
<evidence type="ECO:0000305" key="11"/>
<evidence type="ECO:0000305" key="12">
    <source>
    </source>
</evidence>
<evidence type="ECO:0007744" key="13">
    <source>
        <dbReference type="PDB" id="2CIN"/>
    </source>
</evidence>
<evidence type="ECO:0007744" key="14">
    <source>
        <dbReference type="PDB" id="2CJD"/>
    </source>
</evidence>
<evidence type="ECO:0007744" key="15">
    <source>
        <dbReference type="PDB" id="2CJG"/>
    </source>
</evidence>
<evidence type="ECO:0007744" key="16">
    <source>
        <dbReference type="PDB" id="2CJH"/>
    </source>
</evidence>
<evidence type="ECO:0007744" key="17">
    <source>
        <dbReference type="PDB" id="2JJE"/>
    </source>
</evidence>
<evidence type="ECO:0007744" key="18">
    <source>
        <dbReference type="PDB" id="2JJF"/>
    </source>
</evidence>
<evidence type="ECO:0007744" key="19">
    <source>
        <dbReference type="PDB" id="2JJG"/>
    </source>
</evidence>
<evidence type="ECO:0007744" key="20">
    <source>
        <dbReference type="PDB" id="2JJH"/>
    </source>
</evidence>
<evidence type="ECO:0007829" key="21">
    <source>
        <dbReference type="PDB" id="2CJG"/>
    </source>
</evidence>
<evidence type="ECO:0007829" key="22">
    <source>
        <dbReference type="PDB" id="2JJH"/>
    </source>
</evidence>
<dbReference type="EC" id="2.6.1.36" evidence="2 3 6"/>
<dbReference type="EMBL" id="AL123456">
    <property type="protein sequence ID" value="CCP46109.1"/>
    <property type="molecule type" value="Genomic_DNA"/>
</dbReference>
<dbReference type="PIR" id="C70981">
    <property type="entry name" value="C70981"/>
</dbReference>
<dbReference type="RefSeq" id="NP_217807.1">
    <property type="nucleotide sequence ID" value="NC_000962.3"/>
</dbReference>
<dbReference type="RefSeq" id="WP_003900004.1">
    <property type="nucleotide sequence ID" value="NZ_NVQJ01000003.1"/>
</dbReference>
<dbReference type="PDB" id="2CIN">
    <property type="method" value="X-ray"/>
    <property type="resolution" value="1.98 A"/>
    <property type="chains" value="A=1-449"/>
</dbReference>
<dbReference type="PDB" id="2CJD">
    <property type="method" value="X-ray"/>
    <property type="resolution" value="2.00 A"/>
    <property type="chains" value="A=1-449"/>
</dbReference>
<dbReference type="PDB" id="2CJG">
    <property type="method" value="X-ray"/>
    <property type="resolution" value="1.95 A"/>
    <property type="chains" value="A=1-449"/>
</dbReference>
<dbReference type="PDB" id="2CJH">
    <property type="method" value="X-ray"/>
    <property type="resolution" value="2.00 A"/>
    <property type="chains" value="A=1-449"/>
</dbReference>
<dbReference type="PDB" id="2JJE">
    <property type="method" value="X-ray"/>
    <property type="resolution" value="2.20 A"/>
    <property type="chains" value="A=1-449"/>
</dbReference>
<dbReference type="PDB" id="2JJF">
    <property type="method" value="X-ray"/>
    <property type="resolution" value="1.95 A"/>
    <property type="chains" value="A=1-449"/>
</dbReference>
<dbReference type="PDB" id="2JJG">
    <property type="method" value="X-ray"/>
    <property type="resolution" value="2.40 A"/>
    <property type="chains" value="A=1-449"/>
</dbReference>
<dbReference type="PDB" id="2JJH">
    <property type="method" value="X-ray"/>
    <property type="resolution" value="2.70 A"/>
    <property type="chains" value="A=1-449"/>
</dbReference>
<dbReference type="PDBsum" id="2CIN"/>
<dbReference type="PDBsum" id="2CJD"/>
<dbReference type="PDBsum" id="2CJG"/>
<dbReference type="PDBsum" id="2CJH"/>
<dbReference type="PDBsum" id="2JJE"/>
<dbReference type="PDBsum" id="2JJF"/>
<dbReference type="PDBsum" id="2JJG"/>
<dbReference type="PDBsum" id="2JJH"/>
<dbReference type="SMR" id="P9WQ77"/>
<dbReference type="FunCoup" id="P9WQ77">
    <property type="interactions" value="210"/>
</dbReference>
<dbReference type="STRING" id="83332.Rv3290c"/>
<dbReference type="BindingDB" id="P9WQ77"/>
<dbReference type="ChEMBL" id="CHEMBL2259247"/>
<dbReference type="DrugBank" id="DB08071">
    <property type="generic name" value="(2S)-1-methyl-2-[(2S,4R)-2-methyl-4-phenylpentyl]piperidine"/>
</dbReference>
<dbReference type="PaxDb" id="83332-Rv3290c"/>
<dbReference type="DNASU" id="887904"/>
<dbReference type="GeneID" id="887904"/>
<dbReference type="KEGG" id="mtu:Rv3290c"/>
<dbReference type="KEGG" id="mtv:RVBD_3290c"/>
<dbReference type="TubercuList" id="Rv3290c"/>
<dbReference type="eggNOG" id="COG0160">
    <property type="taxonomic scope" value="Bacteria"/>
</dbReference>
<dbReference type="InParanoid" id="P9WQ77"/>
<dbReference type="OrthoDB" id="9801052at2"/>
<dbReference type="PhylomeDB" id="P9WQ77"/>
<dbReference type="BRENDA" id="2.6.1.36">
    <property type="organism ID" value="3445"/>
</dbReference>
<dbReference type="EvolutionaryTrace" id="P9WQ77"/>
<dbReference type="Proteomes" id="UP000001584">
    <property type="component" value="Chromosome"/>
</dbReference>
<dbReference type="GO" id="GO:0045484">
    <property type="term" value="F:L-lysine 6-transaminase activity"/>
    <property type="evidence" value="ECO:0007669"/>
    <property type="project" value="UniProtKB-EC"/>
</dbReference>
<dbReference type="GO" id="GO:0030170">
    <property type="term" value="F:pyridoxal phosphate binding"/>
    <property type="evidence" value="ECO:0000318"/>
    <property type="project" value="GO_Central"/>
</dbReference>
<dbReference type="GO" id="GO:0017000">
    <property type="term" value="P:antibiotic biosynthetic process"/>
    <property type="evidence" value="ECO:0007669"/>
    <property type="project" value="InterPro"/>
</dbReference>
<dbReference type="GO" id="GO:0009450">
    <property type="term" value="P:gamma-aminobutyric acid catabolic process"/>
    <property type="evidence" value="ECO:0000318"/>
    <property type="project" value="GO_Central"/>
</dbReference>
<dbReference type="CDD" id="cd00610">
    <property type="entry name" value="OAT_like"/>
    <property type="match status" value="1"/>
</dbReference>
<dbReference type="FunFam" id="3.40.640.10:FF:000073">
    <property type="entry name" value="Probable 4-aminobutyrate aminotransferase"/>
    <property type="match status" value="1"/>
</dbReference>
<dbReference type="Gene3D" id="3.90.1150.10">
    <property type="entry name" value="Aspartate Aminotransferase, domain 1"/>
    <property type="match status" value="1"/>
</dbReference>
<dbReference type="Gene3D" id="3.40.640.10">
    <property type="entry name" value="Type I PLP-dependent aspartate aminotransferase-like (Major domain)"/>
    <property type="match status" value="1"/>
</dbReference>
<dbReference type="InterPro" id="IPR005814">
    <property type="entry name" value="Aminotrans_3"/>
</dbReference>
<dbReference type="InterPro" id="IPR049704">
    <property type="entry name" value="Aminotrans_3_PPA_site"/>
</dbReference>
<dbReference type="InterPro" id="IPR017657">
    <property type="entry name" value="L-lysine_6-transaminase"/>
</dbReference>
<dbReference type="InterPro" id="IPR015424">
    <property type="entry name" value="PyrdxlP-dep_Trfase"/>
</dbReference>
<dbReference type="InterPro" id="IPR015421">
    <property type="entry name" value="PyrdxlP-dep_Trfase_major"/>
</dbReference>
<dbReference type="InterPro" id="IPR015422">
    <property type="entry name" value="PyrdxlP-dep_Trfase_small"/>
</dbReference>
<dbReference type="NCBIfam" id="TIGR03251">
    <property type="entry name" value="LAT_fam"/>
    <property type="match status" value="1"/>
</dbReference>
<dbReference type="PANTHER" id="PTHR43206:SF2">
    <property type="entry name" value="4-AMINOBUTYRATE AMINOTRANSFERASE GABT"/>
    <property type="match status" value="1"/>
</dbReference>
<dbReference type="PANTHER" id="PTHR43206">
    <property type="entry name" value="AMINOTRANSFERASE"/>
    <property type="match status" value="1"/>
</dbReference>
<dbReference type="Pfam" id="PF00202">
    <property type="entry name" value="Aminotran_3"/>
    <property type="match status" value="1"/>
</dbReference>
<dbReference type="PIRSF" id="PIRSF000521">
    <property type="entry name" value="Transaminase_4ab_Lys_Orn"/>
    <property type="match status" value="1"/>
</dbReference>
<dbReference type="SUPFAM" id="SSF53383">
    <property type="entry name" value="PLP-dependent transferases"/>
    <property type="match status" value="1"/>
</dbReference>
<dbReference type="PROSITE" id="PS00600">
    <property type="entry name" value="AA_TRANSFER_CLASS_3"/>
    <property type="match status" value="1"/>
</dbReference>
<comment type="function">
    <text evidence="2 3 6 12">Catalyzes the transfer of the terminal amino group of L-lysine to alpha-ketoglutarate to yield L-glutamate and 2-aminoadipate 6-semialdehyde ((S)-2-amino-6-oxohexanoate), which is spontaneously converted to the dehydrated form 1-piperideine 6-carboxylate (PubMed:16754985, PubMed:16950391, PubMed:26003725). Probably plays a role in persistence (Probable).</text>
</comment>
<comment type="catalytic activity">
    <reaction evidence="2 3 6">
        <text>L-lysine + 2-oxoglutarate = (S)-2-amino-6-oxohexanoate + L-glutamate</text>
        <dbReference type="Rhea" id="RHEA:21200"/>
        <dbReference type="ChEBI" id="CHEBI:16810"/>
        <dbReference type="ChEBI" id="CHEBI:29985"/>
        <dbReference type="ChEBI" id="CHEBI:32551"/>
        <dbReference type="ChEBI" id="CHEBI:58321"/>
        <dbReference type="EC" id="2.6.1.36"/>
    </reaction>
</comment>
<comment type="cofactor">
    <cofactor evidence="2 3 6">
        <name>pyridoxal 5'-phosphate</name>
        <dbReference type="ChEBI" id="CHEBI:597326"/>
    </cofactor>
</comment>
<comment type="activity regulation">
    <text evidence="6">Inhibited by 2-aminomethyl piperidine derivative.</text>
</comment>
<comment type="biophysicochemical properties">
    <kinetics>
        <KM evidence="3 6">1.2 mM for L-lysine</KM>
        <KM evidence="3 6">2.3 mM for alpha-ketoglutarate</KM>
        <text evidence="3 6">kcat is 55 min(-1) with L-lysine as substrate. kcat is 86 min(-1) with alpha-ketoglutarate as substrate.</text>
    </kinetics>
</comment>
<comment type="subunit">
    <text evidence="2 3 6">Homodimer.</text>
</comment>
<comment type="induction">
    <text evidence="1 4">42-fold induced by starvation (PubMed:11929527). Expression is regulated by the HTH-type transcriptional regulator LrpA (PubMed:18042675).</text>
</comment>
<comment type="domain">
    <text evidence="3">Contains a Glu-243 'switch' that allows the enzyme to change substrate preferences in the two half-reactions (PubMed:16950391). The unique substrate L-lysine is recognized specifically when Glu-243 maintains a salt bridge with Arg-422 (PubMed:16950391). On the other hand, the binding of the common C5 substrates L-glutamate and alpha-ketoglutarate is enabled when Glu-243 switches away and unshields Arg-422 (PubMed:16950391).</text>
</comment>
<comment type="miscellaneous">
    <text evidence="5 7 8">Was identified as a high-confidence drug target (PubMed:19099550, PubMed:26299907, PubMed:26348876). Various compounds targeting the LAT enzyme have been identified as potential anti-tuberculosis agents (PubMed:26299907, PubMed:26348876).</text>
</comment>
<comment type="similarity">
    <text evidence="11">Belongs to the class-III pyridoxal-phosphate-dependent aminotransferase family.</text>
</comment>
<protein>
    <recommendedName>
        <fullName evidence="9">L-lysine-epsilon aminotransferase</fullName>
        <shortName>L-lysine aminotransferase</shortName>
        <shortName evidence="9">LAT</shortName>
        <ecNumber evidence="2 3 6">2.6.1.36</ecNumber>
    </recommendedName>
    <alternativeName>
        <fullName>Lysine 6-aminotransferase</fullName>
    </alternativeName>
</protein>
<gene>
    <name evidence="10" type="primary">lat</name>
    <name type="ordered locus">Rv3290c</name>
    <name type="ORF">MTCY71.30</name>
</gene>
<reference key="1">
    <citation type="journal article" date="1998" name="Nature">
        <title>Deciphering the biology of Mycobacterium tuberculosis from the complete genome sequence.</title>
        <authorList>
            <person name="Cole S.T."/>
            <person name="Brosch R."/>
            <person name="Parkhill J."/>
            <person name="Garnier T."/>
            <person name="Churcher C.M."/>
            <person name="Harris D.E."/>
            <person name="Gordon S.V."/>
            <person name="Eiglmeier K."/>
            <person name="Gas S."/>
            <person name="Barry C.E. III"/>
            <person name="Tekaia F."/>
            <person name="Badcock K."/>
            <person name="Basham D."/>
            <person name="Brown D."/>
            <person name="Chillingworth T."/>
            <person name="Connor R."/>
            <person name="Davies R.M."/>
            <person name="Devlin K."/>
            <person name="Feltwell T."/>
            <person name="Gentles S."/>
            <person name="Hamlin N."/>
            <person name="Holroyd S."/>
            <person name="Hornsby T."/>
            <person name="Jagels K."/>
            <person name="Krogh A."/>
            <person name="McLean J."/>
            <person name="Moule S."/>
            <person name="Murphy L.D."/>
            <person name="Oliver S."/>
            <person name="Osborne J."/>
            <person name="Quail M.A."/>
            <person name="Rajandream M.A."/>
            <person name="Rogers J."/>
            <person name="Rutter S."/>
            <person name="Seeger K."/>
            <person name="Skelton S."/>
            <person name="Squares S."/>
            <person name="Squares R."/>
            <person name="Sulston J.E."/>
            <person name="Taylor K."/>
            <person name="Whitehead S."/>
            <person name="Barrell B.G."/>
        </authorList>
    </citation>
    <scope>NUCLEOTIDE SEQUENCE [LARGE SCALE GENOMIC DNA]</scope>
    <source>
        <strain>ATCC 25618 / H37Rv</strain>
    </source>
</reference>
<reference key="2">
    <citation type="journal article" date="2002" name="Mol. Microbiol.">
        <title>Evaluation of a nutrient starvation model of Mycobacterium tuberculosis persistence by gene and protein expression profiling.</title>
        <authorList>
            <person name="Betts J.C."/>
            <person name="Lukey P.T."/>
            <person name="Robb L.C."/>
            <person name="McAdam R.A."/>
            <person name="Duncan K."/>
        </authorList>
    </citation>
    <scope>INDUCTION FOLLOWING STARVATION</scope>
    <source>
        <strain>ATCC 25618 / H37Rv / NCTC 7416</strain>
    </source>
</reference>
<reference key="3">
    <citation type="journal article" date="2006" name="Acta Crystallogr. F">
        <title>Overexpression, purification and crystallization of lysine epsilon-aminotransferase (Rv3290c) from Mycobacterium tuberculosis H37Rv.</title>
        <authorList>
            <person name="Tripathi S.M."/>
            <person name="Ramachandran R."/>
        </authorList>
    </citation>
    <scope>FUNCTION</scope>
    <scope>CATALYTIC ACTIVITY</scope>
    <scope>COFACTOR</scope>
    <scope>SUBUNIT</scope>
    <scope>CRYSTALLIZATION</scope>
    <source>
        <strain>H37Rv</strain>
    </source>
</reference>
<reference key="4">
    <citation type="journal article" date="2008" name="BMC Syst. Biol.">
        <title>targetTB: a target identification pipeline for Mycobacterium tuberculosis through an interactome, reactome and genome-scale structural analysis.</title>
        <authorList>
            <person name="Raman K."/>
            <person name="Yeturu K."/>
            <person name="Chandra N."/>
        </authorList>
    </citation>
    <scope>IDENTIFICATION AS A DRUG TARGET [LARGE SCALE ANALYSIS]</scope>
</reference>
<reference key="5">
    <citation type="journal article" date="2008" name="Protein Sci.">
        <title>Crystal structure of Mycobacterium tuberculosis LrpA, a leucine-responsive global regulator associated with starvation response.</title>
        <authorList>
            <person name="Reddy M.C."/>
            <person name="Gokulan K."/>
            <person name="Jacobs W.R."/>
            <person name="Ioerger T.R."/>
            <person name="Sacchettini J.C."/>
        </authorList>
    </citation>
    <scope>TRANSCRIPTIONAL REGULATION</scope>
    <source>
        <strain>H37Rv</strain>
    </source>
</reference>
<reference key="6">
    <citation type="journal article" date="2011" name="Mol. Cell. Proteomics">
        <title>Proteogenomic analysis of Mycobacterium tuberculosis by high resolution mass spectrometry.</title>
        <authorList>
            <person name="Kelkar D.S."/>
            <person name="Kumar D."/>
            <person name="Kumar P."/>
            <person name="Balakrishnan L."/>
            <person name="Muthusamy B."/>
            <person name="Yadav A.K."/>
            <person name="Shrivastava P."/>
            <person name="Marimuthu A."/>
            <person name="Anand S."/>
            <person name="Sundaram H."/>
            <person name="Kingsbury R."/>
            <person name="Harsha H.C."/>
            <person name="Nair B."/>
            <person name="Prasad T.S."/>
            <person name="Chauhan D.S."/>
            <person name="Katoch K."/>
            <person name="Katoch V.M."/>
            <person name="Kumar P."/>
            <person name="Chaerkady R."/>
            <person name="Ramachandran S."/>
            <person name="Dash D."/>
            <person name="Pandey A."/>
        </authorList>
    </citation>
    <scope>IDENTIFICATION BY MASS SPECTROMETRY [LARGE SCALE ANALYSIS]</scope>
    <source>
        <strain>ATCC 25618 / H37Rv</strain>
    </source>
</reference>
<reference key="7">
    <citation type="journal article" date="2015" name="Tuberculosis">
        <title>Discovery of novel lysine epsilon-aminotransferase inhibitors: An intriguing potential target for latent tuberculosis.</title>
        <authorList>
            <person name="Devi P.B."/>
            <person name="Sridevi J.P."/>
            <person name="Kakan S.S."/>
            <person name="Saxena S."/>
            <person name="Jeankumar V.U."/>
            <person name="Soni V."/>
            <person name="Anantaraju H.S."/>
            <person name="Yogeeswari P."/>
            <person name="Sriram D."/>
        </authorList>
    </citation>
    <scope>IDENTIFICATION AS A DRUG TARGET</scope>
</reference>
<reference key="8">
    <citation type="journal article" date="2016" name="Chem. Biol. Drug Des.">
        <title>Design and Development of Mycobacterium tuberculosis Lysine epsilon-Aminotransferase Inhibitors for Latent Tuberculosis Infection.</title>
        <authorList>
            <person name="Parthiban B.D."/>
            <person name="Saxena S."/>
            <person name="Chandran M."/>
            <person name="Jonnalagadda P.S."/>
            <person name="Yadav R."/>
            <person name="Srilakshmi R.R."/>
            <person name="Perumal Y."/>
            <person name="Dharmarajan S."/>
        </authorList>
    </citation>
    <scope>IDENTIFICATION AS A DRUG TARGET</scope>
</reference>
<reference evidence="13 14 15 16" key="9">
    <citation type="journal article" date="2006" name="J. Mol. Biol.">
        <title>Direct evidence for a glutamate switch necessary for substrate recognition: crystal structures of lysine epsilon-aminotransferase (Rv3290c) from Mycobacterium tuberculosis H37Rv.</title>
        <authorList>
            <person name="Mani Tripathi S."/>
            <person name="Ramachandran R."/>
        </authorList>
    </citation>
    <scope>X-RAY CRYSTALLOGRAPHY (1.95 ANGSTROMS) IN COMPLEXES WITH 2-OXOGLUTARATE; LYSINE AND PYRIDOXAL 5'-PHOSPHATE</scope>
    <scope>FUNCTION</scope>
    <scope>CATALYTIC ACTIVITY</scope>
    <scope>REACTION MECHANISM</scope>
    <scope>COFACTOR</scope>
    <scope>BIOPHYSICOCHEMICAL PROPERTIES</scope>
    <scope>SUBUNIT</scope>
    <scope>DOMAIN</scope>
    <scope>PYRIDOXAL PHOSPHATE AT LYS-300</scope>
</reference>
<reference evidence="17 18 19 20" key="10">
    <citation type="journal article" date="2015" name="Biochem. Biophys. Res. Commun.">
        <title>Mutational analysis of Mycobacterium tuberculosis lysine -aminotransferase and inhibitor co-crystal structures, reveals distinct binding modes.</title>
        <authorList>
            <person name="Tripathi S.M."/>
            <person name="Agarwal A."/>
            <person name="Ramachandran R."/>
        </authorList>
    </citation>
    <scope>X-RAY CRYSTALLOGRAPHY (1.95 ANGSTROMS) OF WILD-TYPE IN COMPLEX WITH PYRIDOXAL 5'-PHOSPHATE AND INHIBITOR AND OF MUTANTS ALA-243; ALA-328 AND SER-330 IN COMPLEX WITH 2-OXOGLUTARATE AND PYRIDOXAL 5'-PHOSPHATE</scope>
    <scope>FUNCTION</scope>
    <scope>CATALYTIC ACTIVITY</scope>
    <scope>COFACTOR</scope>
    <scope>ACTIVITY REGULATION</scope>
    <scope>BIOPHYSICOCHEMICAL PROPERTIES</scope>
    <scope>SUBUNIT</scope>
    <scope>PYRIDOXAL PHOSPHATE AT LYS-300</scope>
    <scope>MUTAGENESIS OF GLU-243; ASN-328 AND THR-330</scope>
</reference>
<accession>P9WQ77</accession>
<accession>L0TF67</accession>
<accession>P63509</accession>
<accession>P96895</accession>
<keyword id="KW-0002">3D-structure</keyword>
<keyword id="KW-0032">Aminotransferase</keyword>
<keyword id="KW-0663">Pyridoxal phosphate</keyword>
<keyword id="KW-1185">Reference proteome</keyword>
<keyword id="KW-0808">Transferase</keyword>
<organism>
    <name type="scientific">Mycobacterium tuberculosis (strain ATCC 25618 / H37Rv)</name>
    <dbReference type="NCBI Taxonomy" id="83332"/>
    <lineage>
        <taxon>Bacteria</taxon>
        <taxon>Bacillati</taxon>
        <taxon>Actinomycetota</taxon>
        <taxon>Actinomycetes</taxon>
        <taxon>Mycobacteriales</taxon>
        <taxon>Mycobacteriaceae</taxon>
        <taxon>Mycobacterium</taxon>
        <taxon>Mycobacterium tuberculosis complex</taxon>
    </lineage>
</organism>
<name>LAT_MYCTU</name>
<feature type="chain" id="PRO_0000120512" description="L-lysine-epsilon aminotransferase">
    <location>
        <begin position="1"/>
        <end position="449"/>
    </location>
</feature>
<feature type="binding site" evidence="3 6 13 14 16 17 19 20">
    <location>
        <position position="128"/>
    </location>
    <ligand>
        <name>pyridoxal 5'-phosphate</name>
        <dbReference type="ChEBI" id="CHEBI:597326"/>
    </ligand>
</feature>
<feature type="binding site" evidence="3 6 13 14 16 17 19 20">
    <location>
        <position position="129"/>
    </location>
    <ligand>
        <name>pyridoxal 5'-phosphate</name>
        <dbReference type="ChEBI" id="CHEBI:597326"/>
    </ligand>
</feature>
<feature type="binding site" evidence="3 6 16 20">
    <location>
        <position position="170"/>
    </location>
    <ligand>
        <name>2-oxoglutarate</name>
        <dbReference type="ChEBI" id="CHEBI:16810"/>
    </ligand>
</feature>
<feature type="binding site" evidence="3 14">
    <location>
        <position position="170"/>
    </location>
    <ligand>
        <name>L-lysine</name>
        <dbReference type="ChEBI" id="CHEBI:32551"/>
    </ligand>
</feature>
<feature type="binding site" evidence="3 6 16 20">
    <location>
        <position position="274"/>
    </location>
    <ligand>
        <name>2-oxoglutarate</name>
        <dbReference type="ChEBI" id="CHEBI:16810"/>
    </ligand>
</feature>
<feature type="binding site" evidence="3 6 13 14 16 17 19 20">
    <location>
        <position position="274"/>
    </location>
    <ligand>
        <name>pyridoxal 5'-phosphate</name>
        <dbReference type="ChEBI" id="CHEBI:597326"/>
    </ligand>
</feature>
<feature type="binding site" evidence="3 6 16 20">
    <location>
        <position position="422"/>
    </location>
    <ligand>
        <name>2-oxoglutarate</name>
        <dbReference type="ChEBI" id="CHEBI:16810"/>
    </ligand>
</feature>
<feature type="modified residue" description="N6-(pyridoxal phosphate)lysine" evidence="3 6 13 16 17 19 20">
    <location>
        <position position="300"/>
    </location>
</feature>
<feature type="mutagenesis site" description="Retains activity, but binds alpha-ketoglutarate in a different conformation." evidence="6">
    <original>E</original>
    <variation>A</variation>
    <location>
        <position position="243"/>
    </location>
</feature>
<feature type="mutagenesis site" description="Loss of activity but can still bind pyridoxal 5'-phosphate." evidence="6">
    <original>N</original>
    <variation>A</variation>
    <location>
        <position position="328"/>
    </location>
</feature>
<feature type="mutagenesis site" description="Loss of activity. Cannot bind pyridoxal 5'-phosphate." evidence="6">
    <original>T</original>
    <variation>A</variation>
    <variation>S</variation>
    <location>
        <position position="330"/>
    </location>
</feature>
<feature type="helix" evidence="21">
    <location>
        <begin position="17"/>
        <end position="19"/>
    </location>
</feature>
<feature type="helix" evidence="21">
    <location>
        <begin position="20"/>
        <end position="25"/>
    </location>
</feature>
<feature type="turn" evidence="21">
    <location>
        <begin position="39"/>
        <end position="41"/>
    </location>
</feature>
<feature type="strand" evidence="21">
    <location>
        <begin position="46"/>
        <end position="49"/>
    </location>
</feature>
<feature type="turn" evidence="21">
    <location>
        <begin position="50"/>
        <end position="52"/>
    </location>
</feature>
<feature type="strand" evidence="21">
    <location>
        <begin position="55"/>
        <end position="60"/>
    </location>
</feature>
<feature type="helix" evidence="21">
    <location>
        <begin position="61"/>
        <end position="64"/>
    </location>
</feature>
<feature type="helix" evidence="21">
    <location>
        <begin position="73"/>
        <end position="76"/>
    </location>
</feature>
<feature type="helix" evidence="21">
    <location>
        <begin position="79"/>
        <end position="89"/>
    </location>
</feature>
<feature type="turn" evidence="21">
    <location>
        <begin position="95"/>
        <end position="97"/>
    </location>
</feature>
<feature type="helix" evidence="21">
    <location>
        <begin position="101"/>
        <end position="114"/>
    </location>
</feature>
<feature type="strand" evidence="21">
    <location>
        <begin position="121"/>
        <end position="127"/>
    </location>
</feature>
<feature type="helix" evidence="21">
    <location>
        <begin position="128"/>
        <end position="149"/>
    </location>
</feature>
<feature type="strand" evidence="21">
    <location>
        <begin position="159"/>
        <end position="163"/>
    </location>
</feature>
<feature type="helix" evidence="21">
    <location>
        <begin position="174"/>
        <end position="176"/>
    </location>
</feature>
<feature type="helix" evidence="21">
    <location>
        <begin position="182"/>
        <end position="185"/>
    </location>
</feature>
<feature type="helix" evidence="21">
    <location>
        <begin position="207"/>
        <end position="227"/>
    </location>
</feature>
<feature type="turn" evidence="21">
    <location>
        <begin position="229"/>
        <end position="231"/>
    </location>
</feature>
<feature type="strand" evidence="21">
    <location>
        <begin position="232"/>
        <end position="237"/>
    </location>
</feature>
<feature type="strand" evidence="21">
    <location>
        <begin position="239"/>
        <end position="241"/>
    </location>
</feature>
<feature type="turn" evidence="21">
    <location>
        <begin position="242"/>
        <end position="245"/>
    </location>
</feature>
<feature type="strand" evidence="22">
    <location>
        <begin position="246"/>
        <end position="248"/>
    </location>
</feature>
<feature type="helix" evidence="21">
    <location>
        <begin position="251"/>
        <end position="263"/>
    </location>
</feature>
<feature type="strand" evidence="21">
    <location>
        <begin position="267"/>
        <end position="271"/>
    </location>
</feature>
<feature type="turn" evidence="21">
    <location>
        <begin position="273"/>
        <end position="280"/>
    </location>
</feature>
<feature type="strand" evidence="21">
    <location>
        <begin position="281"/>
        <end position="284"/>
    </location>
</feature>
<feature type="helix" evidence="21">
    <location>
        <begin position="286"/>
        <end position="289"/>
    </location>
</feature>
<feature type="strand" evidence="21">
    <location>
        <begin position="294"/>
        <end position="298"/>
    </location>
</feature>
<feature type="helix" evidence="21">
    <location>
        <begin position="300"/>
        <end position="302"/>
    </location>
</feature>
<feature type="strand" evidence="21">
    <location>
        <begin position="303"/>
        <end position="309"/>
    </location>
</feature>
<feature type="helix" evidence="21">
    <location>
        <begin position="311"/>
        <end position="315"/>
    </location>
</feature>
<feature type="turn" evidence="21">
    <location>
        <begin position="320"/>
        <end position="322"/>
    </location>
</feature>
<feature type="strand" evidence="21">
    <location>
        <begin position="330"/>
        <end position="333"/>
    </location>
</feature>
<feature type="helix" evidence="21">
    <location>
        <begin position="335"/>
        <end position="351"/>
    </location>
</feature>
<feature type="helix" evidence="21">
    <location>
        <begin position="353"/>
        <end position="374"/>
    </location>
</feature>
<feature type="turn" evidence="21">
    <location>
        <begin position="376"/>
        <end position="378"/>
    </location>
</feature>
<feature type="strand" evidence="21">
    <location>
        <begin position="379"/>
        <end position="385"/>
    </location>
</feature>
<feature type="strand" evidence="21">
    <location>
        <begin position="388"/>
        <end position="392"/>
    </location>
</feature>
<feature type="helix" evidence="21">
    <location>
        <begin position="396"/>
        <end position="408"/>
    </location>
</feature>
<feature type="strand" evidence="21">
    <location>
        <begin position="414"/>
        <end position="416"/>
    </location>
</feature>
<feature type="turn" evidence="21">
    <location>
        <begin position="417"/>
        <end position="419"/>
    </location>
</feature>
<feature type="strand" evidence="21">
    <location>
        <begin position="420"/>
        <end position="423"/>
    </location>
</feature>
<feature type="helix" evidence="21">
    <location>
        <begin position="431"/>
        <end position="448"/>
    </location>
</feature>
<proteinExistence type="evidence at protein level"/>